<proteinExistence type="evidence at transcript level"/>
<reference key="1">
    <citation type="thesis" date="1991" institute="University of California Davis" country="United States">
        <authorList>
            <person name="Bloksberg L.N."/>
            <person name="Kado C.I."/>
        </authorList>
    </citation>
    <scope>NUCLEOTIDE SEQUENCE [GENOMIC DNA]</scope>
    <source>
        <strain>cv. Early PAK 7</strain>
    </source>
</reference>
<protein>
    <recommendedName>
        <fullName>Phenylalanine ammonia-lyase</fullName>
        <shortName>PAL</shortName>
        <ecNumber evidence="2">4.3.1.24</ecNumber>
    </recommendedName>
</protein>
<dbReference type="EC" id="4.3.1.24" evidence="2"/>
<dbReference type="EMBL" id="M83314">
    <property type="protein sequence ID" value="AAA34179.2"/>
    <property type="status" value="ALT_SEQ"/>
    <property type="molecule type" value="Genomic_DNA"/>
</dbReference>
<dbReference type="SMR" id="P35511"/>
<dbReference type="FunCoup" id="P35511">
    <property type="interactions" value="344"/>
</dbReference>
<dbReference type="STRING" id="4081.P35511"/>
<dbReference type="PaxDb" id="4081-Solyc09g007920.2.1"/>
<dbReference type="InParanoid" id="P35511"/>
<dbReference type="BRENDA" id="4.3.1.24">
    <property type="organism ID" value="3101"/>
</dbReference>
<dbReference type="UniPathway" id="UPA00713">
    <property type="reaction ID" value="UER00725"/>
</dbReference>
<dbReference type="Proteomes" id="UP000004994">
    <property type="component" value="Unplaced"/>
</dbReference>
<dbReference type="ExpressionAtlas" id="P35511">
    <property type="expression patterns" value="baseline and differential"/>
</dbReference>
<dbReference type="GO" id="GO:0005737">
    <property type="term" value="C:cytoplasm"/>
    <property type="evidence" value="ECO:0007669"/>
    <property type="project" value="UniProtKB-SubCell"/>
</dbReference>
<dbReference type="GO" id="GO:0032991">
    <property type="term" value="C:protein-containing complex"/>
    <property type="evidence" value="ECO:0000304"/>
    <property type="project" value="AgBase"/>
</dbReference>
<dbReference type="GO" id="GO:0016841">
    <property type="term" value="F:ammonia-lyase activity"/>
    <property type="evidence" value="ECO:0000318"/>
    <property type="project" value="GO_Central"/>
</dbReference>
<dbReference type="GO" id="GO:0045548">
    <property type="term" value="F:phenylalanine ammonia-lyase activity"/>
    <property type="evidence" value="ECO:0007669"/>
    <property type="project" value="UniProtKB-EC"/>
</dbReference>
<dbReference type="GO" id="GO:0009800">
    <property type="term" value="P:cinnamic acid biosynthetic process"/>
    <property type="evidence" value="ECO:0007669"/>
    <property type="project" value="UniProtKB-UniPathway"/>
</dbReference>
<dbReference type="GO" id="GO:0006559">
    <property type="term" value="P:L-phenylalanine catabolic process"/>
    <property type="evidence" value="ECO:0007669"/>
    <property type="project" value="UniProtKB-KW"/>
</dbReference>
<dbReference type="CDD" id="cd00332">
    <property type="entry name" value="PAL-HAL"/>
    <property type="match status" value="1"/>
</dbReference>
<dbReference type="FunFam" id="1.10.274.20:FF:000001">
    <property type="entry name" value="Phenylalanine ammonia-lyase"/>
    <property type="match status" value="1"/>
</dbReference>
<dbReference type="FunFam" id="1.10.275.10:FF:000009">
    <property type="entry name" value="Phenylalanine ammonia-lyase"/>
    <property type="match status" value="1"/>
</dbReference>
<dbReference type="FunFam" id="1.20.200.10:FF:000009">
    <property type="entry name" value="Phenylalanine ammonia-lyase"/>
    <property type="match status" value="1"/>
</dbReference>
<dbReference type="Gene3D" id="1.20.200.10">
    <property type="entry name" value="Fumarase/aspartase (Central domain)"/>
    <property type="match status" value="1"/>
</dbReference>
<dbReference type="Gene3D" id="1.10.275.10">
    <property type="entry name" value="Fumarase/aspartase (N-terminal domain)"/>
    <property type="match status" value="1"/>
</dbReference>
<dbReference type="Gene3D" id="1.10.274.20">
    <property type="entry name" value="Phenylalanine ammonia-lyase 1, domain 3"/>
    <property type="match status" value="1"/>
</dbReference>
<dbReference type="InterPro" id="IPR001106">
    <property type="entry name" value="Aromatic_Lyase"/>
</dbReference>
<dbReference type="InterPro" id="IPR024083">
    <property type="entry name" value="Fumarase/histidase_N"/>
</dbReference>
<dbReference type="InterPro" id="IPR008948">
    <property type="entry name" value="L-Aspartase-like"/>
</dbReference>
<dbReference type="InterPro" id="IPR022313">
    <property type="entry name" value="Phe/His_NH3-lyase_AS"/>
</dbReference>
<dbReference type="InterPro" id="IPR005922">
    <property type="entry name" value="Phe_NH3-lyase"/>
</dbReference>
<dbReference type="InterPro" id="IPR023144">
    <property type="entry name" value="Phe_NH3-lyase_shielding_dom_sf"/>
</dbReference>
<dbReference type="NCBIfam" id="TIGR01226">
    <property type="entry name" value="phe_am_lyase"/>
    <property type="match status" value="1"/>
</dbReference>
<dbReference type="PANTHER" id="PTHR10362">
    <property type="entry name" value="HISTIDINE AMMONIA-LYASE"/>
    <property type="match status" value="1"/>
</dbReference>
<dbReference type="Pfam" id="PF00221">
    <property type="entry name" value="Lyase_aromatic"/>
    <property type="match status" value="1"/>
</dbReference>
<dbReference type="SUPFAM" id="SSF48557">
    <property type="entry name" value="L-aspartase-like"/>
    <property type="match status" value="1"/>
</dbReference>
<dbReference type="PROSITE" id="PS00488">
    <property type="entry name" value="PAL_HISTIDASE"/>
    <property type="match status" value="1"/>
</dbReference>
<gene>
    <name type="primary">PAL</name>
</gene>
<comment type="function">
    <text evidence="2">This is a key enzyme of plant metabolism catalyzing the first reaction in the biosynthesis from L-phenylalanine of a wide variety of natural products based on the phenylpropane skeleton.</text>
</comment>
<comment type="catalytic activity">
    <reaction evidence="2">
        <text>L-phenylalanine = (E)-cinnamate + NH4(+)</text>
        <dbReference type="Rhea" id="RHEA:21384"/>
        <dbReference type="ChEBI" id="CHEBI:15669"/>
        <dbReference type="ChEBI" id="CHEBI:28938"/>
        <dbReference type="ChEBI" id="CHEBI:58095"/>
        <dbReference type="EC" id="4.3.1.24"/>
    </reaction>
</comment>
<comment type="pathway">
    <text evidence="5">Phenylpropanoid metabolism; trans-cinnamate biosynthesis; trans-cinnamate from L-phenylalanine: step 1/1.</text>
</comment>
<comment type="subunit">
    <text evidence="2">Homotetramer.</text>
</comment>
<comment type="subcellular location">
    <subcellularLocation>
        <location evidence="5">Cytoplasm</location>
    </subcellularLocation>
</comment>
<comment type="PTM">
    <text evidence="3">Contains an active site 4-methylidene-imidazol-5-one (MIO), which is formed autocatalytically by cyclization and dehydration of residues Ala-Ser-Gly.</text>
</comment>
<comment type="RNA editing">
    <location>
        <position position="23"/>
    </location>
</comment>
<comment type="similarity">
    <text evidence="5">Belongs to the PAL/histidase family.</text>
</comment>
<feature type="chain" id="PRO_0000215397" description="Phenylalanine ammonia-lyase">
    <location>
        <begin position="1"/>
        <end position="704"/>
    </location>
</feature>
<feature type="active site" description="Proton donor/acceptor" evidence="3">
    <location>
        <position position="96"/>
    </location>
</feature>
<feature type="binding site" evidence="3">
    <location>
        <position position="248"/>
    </location>
    <ligand>
        <name>(E)-cinnamate</name>
        <dbReference type="ChEBI" id="CHEBI:15669"/>
    </ligand>
</feature>
<feature type="binding site" evidence="3">
    <location>
        <position position="336"/>
    </location>
    <ligand>
        <name>(E)-cinnamate</name>
        <dbReference type="ChEBI" id="CHEBI:15669"/>
    </ligand>
</feature>
<feature type="binding site" evidence="3">
    <location>
        <position position="342"/>
    </location>
    <ligand>
        <name>(E)-cinnamate</name>
        <dbReference type="ChEBI" id="CHEBI:15669"/>
    </ligand>
</feature>
<feature type="binding site" evidence="3">
    <location>
        <position position="372"/>
    </location>
    <ligand>
        <name>(E)-cinnamate</name>
        <dbReference type="ChEBI" id="CHEBI:15669"/>
    </ligand>
</feature>
<feature type="binding site" evidence="1">
    <location>
        <position position="444"/>
    </location>
    <ligand>
        <name>(E)-cinnamate</name>
        <dbReference type="ChEBI" id="CHEBI:15669"/>
    </ligand>
</feature>
<feature type="binding site" evidence="1">
    <location>
        <position position="472"/>
    </location>
    <ligand>
        <name>(E)-cinnamate</name>
        <dbReference type="ChEBI" id="CHEBI:15669"/>
    </ligand>
</feature>
<feature type="binding site" evidence="3">
    <location>
        <position position="475"/>
    </location>
    <ligand>
        <name>(E)-cinnamate</name>
        <dbReference type="ChEBI" id="CHEBI:15669"/>
    </ligand>
</feature>
<feature type="modified residue" description="2,3-didehydroalanine (Ser)" evidence="4">
    <location>
        <position position="191"/>
    </location>
</feature>
<feature type="cross-link" description="5-imidazolinone (Ala-Gly)" evidence="3">
    <location>
        <begin position="190"/>
        <end position="192"/>
    </location>
</feature>
<sequence>MDLCKKSINDPLNWEMAADSLRGSHLDEVKKMVDEFRKPIVKLGGETLSVAQVASIANVDDKSNGVKVELSESARAGVKASSDWVMDSMSKGTDSYGVTAGFGATSHRRTKNGGALQKELIRFLNAGVFGNGIESFHTLPHSATRAAMLVRINTLLQGYSGIRFEILEAITKLINSNITPCLPLRGTITASGDLVPLSYIAGLLTGRPNSKAVGPNGEKLNAEEAFCVAGISGGFFELQPKEGLALVNGTAVGSAMASIVLFESNIFAVMSEVLSAIFTEVMNGKPEFTDYLTHKLKHHPGQIEAAAIMEHILDGSSYVKVAQKLHEMDPLQKPKQDRYALRTSPQWLGPQIEVIRAATKMIEREINSVNDNPLIDVSRNKALHGGNFQGTPIGVSMDNTRLALASIGKLMFAQFSELVNDYYNNGLPSNLTAGRNPSLDYGFKGAEIAMASYCSELQFLANPVTNHVQSAEQHNQDVNSLGLISARKTAKAVDILKIMSSTYLVALCQAIDLRHLEENLKSVVKNTVSQVAKRTLTMGANGELHPARFSEKELLRVVDREYLFAYADDPCSSNYPLMQKLRQVLVDQAMKNGESEKNVNSSIFQKIGAFEDELIAVLPKEVESVRAVFESGNPLIRNRITECRSYPLYRLVREELGTELLTGEKVRSPGEEIDKVFTAICNGQIIDPLLECLKSWNGAPLPIC</sequence>
<evidence type="ECO:0000250" key="1">
    <source>
        <dbReference type="UniProtKB" id="P11544"/>
    </source>
</evidence>
<evidence type="ECO:0000250" key="2">
    <source>
        <dbReference type="UniProtKB" id="P24481"/>
    </source>
</evidence>
<evidence type="ECO:0000250" key="3">
    <source>
        <dbReference type="UniProtKB" id="Q68G84"/>
    </source>
</evidence>
<evidence type="ECO:0000255" key="4">
    <source>
        <dbReference type="PROSITE-ProRule" id="PRU10122"/>
    </source>
</evidence>
<evidence type="ECO:0000305" key="5"/>
<accession>P35511</accession>
<keyword id="KW-0963">Cytoplasm</keyword>
<keyword id="KW-0456">Lyase</keyword>
<keyword id="KW-0585">Phenylalanine catabolism</keyword>
<keyword id="KW-0587">Phenylpropanoid metabolism</keyword>
<keyword id="KW-1185">Reference proteome</keyword>
<keyword id="KW-0691">RNA editing</keyword>
<organism>
    <name type="scientific">Solanum lycopersicum</name>
    <name type="common">Tomato</name>
    <name type="synonym">Lycopersicon esculentum</name>
    <dbReference type="NCBI Taxonomy" id="4081"/>
    <lineage>
        <taxon>Eukaryota</taxon>
        <taxon>Viridiplantae</taxon>
        <taxon>Streptophyta</taxon>
        <taxon>Embryophyta</taxon>
        <taxon>Tracheophyta</taxon>
        <taxon>Spermatophyta</taxon>
        <taxon>Magnoliopsida</taxon>
        <taxon>eudicotyledons</taxon>
        <taxon>Gunneridae</taxon>
        <taxon>Pentapetalae</taxon>
        <taxon>asterids</taxon>
        <taxon>lamiids</taxon>
        <taxon>Solanales</taxon>
        <taxon>Solanaceae</taxon>
        <taxon>Solanoideae</taxon>
        <taxon>Solaneae</taxon>
        <taxon>Solanum</taxon>
        <taxon>Solanum subgen. Lycopersicon</taxon>
    </lineage>
</organism>
<name>PAL1_SOLLC</name>